<name>ABRX1_SALSA</name>
<organism>
    <name type="scientific">Salmo salar</name>
    <name type="common">Atlantic salmon</name>
    <dbReference type="NCBI Taxonomy" id="8030"/>
    <lineage>
        <taxon>Eukaryota</taxon>
        <taxon>Metazoa</taxon>
        <taxon>Chordata</taxon>
        <taxon>Craniata</taxon>
        <taxon>Vertebrata</taxon>
        <taxon>Euteleostomi</taxon>
        <taxon>Actinopterygii</taxon>
        <taxon>Neopterygii</taxon>
        <taxon>Teleostei</taxon>
        <taxon>Protacanthopterygii</taxon>
        <taxon>Salmoniformes</taxon>
        <taxon>Salmonidae</taxon>
        <taxon>Salmoninae</taxon>
        <taxon>Salmo</taxon>
    </lineage>
</organism>
<accession>B5X1P9</accession>
<gene>
    <name evidence="1" type="primary">abraxas1</name>
    <name type="synonym">abra1</name>
    <name type="synonym">ccdc98</name>
    <name type="synonym">fam175a</name>
</gene>
<proteinExistence type="evidence at transcript level"/>
<feature type="chain" id="PRO_0000373941" description="BRCA1-A complex subunit Abraxas 1">
    <location>
        <begin position="1"/>
        <end position="404"/>
    </location>
</feature>
<feature type="domain" description="MPN" evidence="3">
    <location>
        <begin position="7"/>
        <end position="161"/>
    </location>
</feature>
<feature type="region of interest" description="Disordered" evidence="4">
    <location>
        <begin position="339"/>
        <end position="404"/>
    </location>
</feature>
<feature type="coiled-coil region" evidence="2">
    <location>
        <begin position="219"/>
        <end position="268"/>
    </location>
</feature>
<feature type="short sequence motif" description="pSXXF motif" evidence="5">
    <location>
        <begin position="401"/>
        <end position="404"/>
    </location>
</feature>
<feature type="compositionally biased region" description="Polar residues" evidence="4">
    <location>
        <begin position="391"/>
        <end position="404"/>
    </location>
</feature>
<feature type="modified residue" description="Phosphoserine" evidence="1">
    <location>
        <position position="401"/>
    </location>
</feature>
<keyword id="KW-0156">Chromatin regulator</keyword>
<keyword id="KW-0175">Coiled coil</keyword>
<keyword id="KW-0227">DNA damage</keyword>
<keyword id="KW-0234">DNA repair</keyword>
<keyword id="KW-0539">Nucleus</keyword>
<keyword id="KW-0597">Phosphoprotein</keyword>
<keyword id="KW-1185">Reference proteome</keyword>
<evidence type="ECO:0000250" key="1">
    <source>
        <dbReference type="UniProtKB" id="Q6UWZ7"/>
    </source>
</evidence>
<evidence type="ECO:0000255" key="2"/>
<evidence type="ECO:0000255" key="3">
    <source>
        <dbReference type="PROSITE-ProRule" id="PRU01182"/>
    </source>
</evidence>
<evidence type="ECO:0000256" key="4">
    <source>
        <dbReference type="SAM" id="MobiDB-lite"/>
    </source>
</evidence>
<evidence type="ECO:0000305" key="5"/>
<reference key="1">
    <citation type="submission" date="2008-10" db="EMBL/GenBank/DDBJ databases">
        <title>Salmo salar full-length cDNAs.</title>
        <authorList>
            <person name="Leong J."/>
            <person name="von Schalburg K."/>
            <person name="Cooper G.A."/>
            <person name="Moore R."/>
            <person name="Holt R."/>
            <person name="Davidson W.S."/>
            <person name="Koop B.F."/>
        </authorList>
    </citation>
    <scope>NUCLEOTIDE SEQUENCE [LARGE SCALE MRNA]</scope>
    <source>
        <tissue>Brain</tissue>
    </source>
</reference>
<comment type="function">
    <text evidence="1">Involved in DNA damage response and double-strand break (DSB) repair. Component of the BRCA1-A complex, acting as a central scaffold protein that assembles the various components of the complex and mediates the recruitment of brca1. The BRCA1-A complex specifically recognizes 'Lys-63'-linked ubiquitinated histones H2A and H2AX at DNA lesion sites, leading to target the brca1-bard1 heterodimer to sites of DNA damage at DSBs. This complex also possesses deubiquitinase activity that specifically removes 'Lys-63'-linked ubiquitin on histones H2A and H2AX (By similarity).</text>
</comment>
<comment type="subunit">
    <text evidence="1">Component of the BRCA1-A complex. Component of the BRISC complex. Homodimer. Interacts directly (when phosphorylated at Ser-401) with brca1. The phosphorylated homodimer can interact directly with two brca1 chains, giving rise to a heterotetramer (By similarity).</text>
</comment>
<comment type="subcellular location">
    <subcellularLocation>
        <location evidence="1">Nucleus</location>
    </subcellularLocation>
    <text evidence="1">Localizes at sites of DNA damage at double-strand breaks (DSBs).</text>
</comment>
<comment type="PTM">
    <text evidence="1">Phosphorylation of Ser-401 of the pSXXF motif by ATM or ATR constitutes a specific recognition motif for the BRCT domain of BRCA1.</text>
</comment>
<comment type="similarity">
    <text evidence="5">Belongs to the FAM175 family. Abraxas subfamily.</text>
</comment>
<sequence>MEDSNSYIRVSGFVLGSLMFQHLNSDSDVEGLILGETKAEERSNITDSQIDNIQFEHTINIQKHISCRKLNSFYNRIGEVNRDEIRHILSNYKEENVIGWYKQRRNTDQQITFREQVVHENLKRALSNHELIFLLLTPSEITTSGSTHKLEYAVYRSHGSQYCSVPVLVSNLGLLEEQDYWRLSASCSSVNYNHAVRKHRSKFFSSDGSLHEVDEINDMNNSLQGELKMACKKVEESERLVEKLLADVSDLRRMVNERKQELREISADGASTPAQPRENVLLCEVIKTLFPGASLLQTQALNFQGFPLPEFCCSTDHGIDIATTLPLILSHTLPKARKGRLGRGGGTSWRKCPLRESSEVPKRRKGMLEETDETLSVSGSETEEDLIPANRNGNNLDVSNSPVF</sequence>
<protein>
    <recommendedName>
        <fullName evidence="1">BRCA1-A complex subunit Abraxas 1</fullName>
    </recommendedName>
    <alternativeName>
        <fullName>Coiled-coil domain-containing protein 98</fullName>
    </alternativeName>
    <alternativeName>
        <fullName>Protein FAM175A</fullName>
    </alternativeName>
</protein>
<dbReference type="EMBL" id="BT044968">
    <property type="protein sequence ID" value="ACI33230.1"/>
    <property type="molecule type" value="mRNA"/>
</dbReference>
<dbReference type="SMR" id="B5X1P9"/>
<dbReference type="STRING" id="8030.ENSSSAP00000094760"/>
<dbReference type="PaxDb" id="8030-ENSSSAP00000094760"/>
<dbReference type="Ensembl" id="ENSSSAT00020165638">
    <property type="protein sequence ID" value="ENSSSAP00020126638"/>
    <property type="gene ID" value="ENSSSAG00020070576"/>
</dbReference>
<dbReference type="Ensembl" id="ENSSSAT00070059444">
    <property type="protein sequence ID" value="ENSSSAP00070056970"/>
    <property type="gene ID" value="ENSSSAG00070037063"/>
</dbReference>
<dbReference type="Ensembl" id="ENSSSAT00075058711">
    <property type="protein sequence ID" value="ENSSSAP00075041245"/>
    <property type="gene ID" value="ENSSSAG00075028131"/>
</dbReference>
<dbReference type="KEGG" id="sasa:100194936"/>
<dbReference type="OMA" id="MEYAAFI"/>
<dbReference type="OrthoDB" id="284562at7898"/>
<dbReference type="Proteomes" id="UP000087266">
    <property type="component" value="Chromosome ssa13"/>
</dbReference>
<dbReference type="Bgee" id="ENSSSAG00000072520">
    <property type="expression patterns" value="Expressed in ovary and 25 other cell types or tissues"/>
</dbReference>
<dbReference type="GO" id="GO:0070531">
    <property type="term" value="C:BRCA1-A complex"/>
    <property type="evidence" value="ECO:0000250"/>
    <property type="project" value="UniProtKB"/>
</dbReference>
<dbReference type="GO" id="GO:0005634">
    <property type="term" value="C:nucleus"/>
    <property type="evidence" value="ECO:0000250"/>
    <property type="project" value="UniProtKB"/>
</dbReference>
<dbReference type="GO" id="GO:0008017">
    <property type="term" value="F:microtubule binding"/>
    <property type="evidence" value="ECO:0007669"/>
    <property type="project" value="TreeGrafter"/>
</dbReference>
<dbReference type="GO" id="GO:0031593">
    <property type="term" value="F:polyubiquitin modification-dependent protein binding"/>
    <property type="evidence" value="ECO:0000250"/>
    <property type="project" value="UniProtKB"/>
</dbReference>
<dbReference type="GO" id="GO:0008608">
    <property type="term" value="P:attachment of spindle microtubules to kinetochore"/>
    <property type="evidence" value="ECO:0007669"/>
    <property type="project" value="TreeGrafter"/>
</dbReference>
<dbReference type="GO" id="GO:0006325">
    <property type="term" value="P:chromatin organization"/>
    <property type="evidence" value="ECO:0007669"/>
    <property type="project" value="UniProtKB-KW"/>
</dbReference>
<dbReference type="GO" id="GO:0006302">
    <property type="term" value="P:double-strand break repair"/>
    <property type="evidence" value="ECO:0000250"/>
    <property type="project" value="UniProtKB"/>
</dbReference>
<dbReference type="GO" id="GO:0007095">
    <property type="term" value="P:mitotic G2 DNA damage checkpoint signaling"/>
    <property type="evidence" value="ECO:0000250"/>
    <property type="project" value="UniProtKB"/>
</dbReference>
<dbReference type="GO" id="GO:0090307">
    <property type="term" value="P:mitotic spindle assembly"/>
    <property type="evidence" value="ECO:0007669"/>
    <property type="project" value="TreeGrafter"/>
</dbReference>
<dbReference type="GO" id="GO:0045739">
    <property type="term" value="P:positive regulation of DNA repair"/>
    <property type="evidence" value="ECO:0000250"/>
    <property type="project" value="UniProtKB"/>
</dbReference>
<dbReference type="GO" id="GO:0070536">
    <property type="term" value="P:protein K63-linked deubiquitination"/>
    <property type="evidence" value="ECO:0007669"/>
    <property type="project" value="TreeGrafter"/>
</dbReference>
<dbReference type="GO" id="GO:0010212">
    <property type="term" value="P:response to ionizing radiation"/>
    <property type="evidence" value="ECO:0000250"/>
    <property type="project" value="UniProtKB"/>
</dbReference>
<dbReference type="CDD" id="cd23523">
    <property type="entry name" value="Abraxas_1"/>
    <property type="match status" value="1"/>
</dbReference>
<dbReference type="InterPro" id="IPR023239">
    <property type="entry name" value="BRISC_Abraxas1"/>
</dbReference>
<dbReference type="InterPro" id="IPR023238">
    <property type="entry name" value="FAM175"/>
</dbReference>
<dbReference type="InterPro" id="IPR037518">
    <property type="entry name" value="MPN"/>
</dbReference>
<dbReference type="PANTHER" id="PTHR31728">
    <property type="entry name" value="ABRAXAS FAMILY MEMBER"/>
    <property type="match status" value="1"/>
</dbReference>
<dbReference type="PANTHER" id="PTHR31728:SF2">
    <property type="entry name" value="BRCA1-A COMPLEX SUBUNIT ABRAXAS 1"/>
    <property type="match status" value="1"/>
</dbReference>
<dbReference type="Pfam" id="PF21125">
    <property type="entry name" value="MPN_2A_DUB_like"/>
    <property type="match status" value="1"/>
</dbReference>
<dbReference type="PRINTS" id="PR02052">
    <property type="entry name" value="ABRAXAS"/>
</dbReference>
<dbReference type="PRINTS" id="PR02051">
    <property type="entry name" value="PROTEINF175"/>
</dbReference>
<dbReference type="PROSITE" id="PS50249">
    <property type="entry name" value="MPN"/>
    <property type="match status" value="1"/>
</dbReference>